<name>H14G1_CYRHA</name>
<protein>
    <recommendedName>
        <fullName>U8-theraphotoxin-Hhn1f</fullName>
        <shortName>U8-TRTX-Hhn1f</shortName>
    </recommendedName>
    <alternativeName>
        <fullName evidence="5">Hainantoxin-XIV-7</fullName>
        <shortName evidence="5">HNTX-XIV-7</shortName>
    </alternativeName>
</protein>
<evidence type="ECO:0000250" key="1"/>
<evidence type="ECO:0000250" key="2">
    <source>
        <dbReference type="UniProtKB" id="Q9PW66"/>
    </source>
</evidence>
<evidence type="ECO:0000255" key="3"/>
<evidence type="ECO:0000305" key="4"/>
<evidence type="ECO:0000312" key="5">
    <source>
        <dbReference type="EMBL" id="ADB56839.1"/>
    </source>
</evidence>
<accession>D2Y2E6</accession>
<dbReference type="EMBL" id="GU293023">
    <property type="protein sequence ID" value="ADB56839.1"/>
    <property type="molecule type" value="mRNA"/>
</dbReference>
<dbReference type="SMR" id="D2Y2E6"/>
<dbReference type="ArachnoServer" id="AS001732">
    <property type="toxin name" value="U8-theraphotoxin-Hhn1f"/>
</dbReference>
<dbReference type="GO" id="GO:0005576">
    <property type="term" value="C:extracellular region"/>
    <property type="evidence" value="ECO:0007669"/>
    <property type="project" value="UniProtKB-SubCell"/>
</dbReference>
<dbReference type="GO" id="GO:0090729">
    <property type="term" value="F:toxin activity"/>
    <property type="evidence" value="ECO:0007669"/>
    <property type="project" value="UniProtKB-KW"/>
</dbReference>
<dbReference type="Gene3D" id="2.10.80.10">
    <property type="entry name" value="Lipase, subunit A"/>
    <property type="match status" value="1"/>
</dbReference>
<dbReference type="InterPro" id="IPR023569">
    <property type="entry name" value="Prokineticin_domain"/>
</dbReference>
<dbReference type="Pfam" id="PF06607">
    <property type="entry name" value="Prokineticin"/>
    <property type="match status" value="1"/>
</dbReference>
<reference key="1">
    <citation type="journal article" date="2010" name="J. Proteome Res.">
        <title>Molecular diversification of peptide toxins from the tarantula Haplopelma hainanum (Ornithoctonus hainana) venom based on transcriptomic, peptidomic, and genomic analyses.</title>
        <authorList>
            <person name="Tang X."/>
            <person name="Zhang Y."/>
            <person name="Hu W."/>
            <person name="Xu D."/>
            <person name="Tao H."/>
            <person name="Yang X."/>
            <person name="Li Y."/>
            <person name="Jiang L."/>
            <person name="Liang S."/>
        </authorList>
    </citation>
    <scope>NUCLEOTIDE SEQUENCE [LARGE SCALE MRNA]</scope>
    <source>
        <tissue>Venom gland</tissue>
    </source>
</reference>
<sequence>MKVVLLVCLVWMMAMMELVSCECWSQADCSDGHCCAGSSFSKNCRPYGGDGEQCEPRNKYEAYSTGCPCEENLMCSVINRCQSA</sequence>
<proteinExistence type="evidence at transcript level"/>
<comment type="subcellular location">
    <subcellularLocation>
        <location evidence="1">Secreted</location>
    </subcellularLocation>
</comment>
<comment type="tissue specificity">
    <text>Expressed by the venom gland.</text>
</comment>
<comment type="similarity">
    <text evidence="4">Belongs to the AVIT (prokineticin) family.</text>
</comment>
<organism>
    <name type="scientific">Cyriopagopus hainanus</name>
    <name type="common">Chinese bird spider</name>
    <name type="synonym">Haplopelma hainanum</name>
    <dbReference type="NCBI Taxonomy" id="209901"/>
    <lineage>
        <taxon>Eukaryota</taxon>
        <taxon>Metazoa</taxon>
        <taxon>Ecdysozoa</taxon>
        <taxon>Arthropoda</taxon>
        <taxon>Chelicerata</taxon>
        <taxon>Arachnida</taxon>
        <taxon>Araneae</taxon>
        <taxon>Mygalomorphae</taxon>
        <taxon>Theraphosidae</taxon>
        <taxon>Haplopelma</taxon>
    </lineage>
</organism>
<feature type="signal peptide" evidence="3">
    <location>
        <begin position="1"/>
        <end position="21"/>
    </location>
</feature>
<feature type="chain" id="PRO_0000400854" description="U8-theraphotoxin-Hhn1f">
    <location>
        <begin position="22"/>
        <end position="84"/>
    </location>
</feature>
<feature type="disulfide bond" evidence="2">
    <location>
        <begin position="23"/>
        <end position="35"/>
    </location>
</feature>
<feature type="disulfide bond" evidence="2">
    <location>
        <begin position="29"/>
        <end position="44"/>
    </location>
</feature>
<feature type="disulfide bond" evidence="2">
    <location>
        <begin position="34"/>
        <end position="67"/>
    </location>
</feature>
<feature type="disulfide bond" evidence="2">
    <location>
        <begin position="54"/>
        <end position="75"/>
    </location>
</feature>
<feature type="disulfide bond" evidence="2">
    <location>
        <begin position="69"/>
        <end position="81"/>
    </location>
</feature>
<keyword id="KW-1015">Disulfide bond</keyword>
<keyword id="KW-0964">Secreted</keyword>
<keyword id="KW-0732">Signal</keyword>
<keyword id="KW-0800">Toxin</keyword>